<comment type="function">
    <text evidence="1">Catalyzes a mechanistically unusual reaction, the ATP-dependent insertion of CO2 between the N7 and N8 nitrogen atoms of 7,8-diaminopelargonic acid (DAPA, also called 7,8-diammoniononanoate) to form a ureido ring.</text>
</comment>
<comment type="catalytic activity">
    <reaction evidence="1">
        <text>(7R,8S)-7,8-diammoniononanoate + CO2 + ATP = (4R,5S)-dethiobiotin + ADP + phosphate + 3 H(+)</text>
        <dbReference type="Rhea" id="RHEA:15805"/>
        <dbReference type="ChEBI" id="CHEBI:15378"/>
        <dbReference type="ChEBI" id="CHEBI:16526"/>
        <dbReference type="ChEBI" id="CHEBI:30616"/>
        <dbReference type="ChEBI" id="CHEBI:43474"/>
        <dbReference type="ChEBI" id="CHEBI:149469"/>
        <dbReference type="ChEBI" id="CHEBI:149473"/>
        <dbReference type="ChEBI" id="CHEBI:456216"/>
        <dbReference type="EC" id="6.3.3.3"/>
    </reaction>
</comment>
<comment type="cofactor">
    <cofactor evidence="1">
        <name>Mg(2+)</name>
        <dbReference type="ChEBI" id="CHEBI:18420"/>
    </cofactor>
</comment>
<comment type="pathway">
    <text evidence="1">Cofactor biosynthesis; biotin biosynthesis; biotin from 7,8-diaminononanoate: step 1/2.</text>
</comment>
<comment type="subunit">
    <text evidence="1">Homodimer.</text>
</comment>
<comment type="subcellular location">
    <subcellularLocation>
        <location evidence="1">Cytoplasm</location>
    </subcellularLocation>
</comment>
<comment type="similarity">
    <text evidence="1">Belongs to the dethiobiotin synthetase family.</text>
</comment>
<proteinExistence type="inferred from homology"/>
<dbReference type="EC" id="6.3.3.3" evidence="1"/>
<dbReference type="EMBL" id="CP000378">
    <property type="protein sequence ID" value="ABF77220.1"/>
    <property type="molecule type" value="Genomic_DNA"/>
</dbReference>
<dbReference type="SMR" id="Q1BT35"/>
<dbReference type="HOGENOM" id="CLU_072551_0_0_4"/>
<dbReference type="UniPathway" id="UPA00078">
    <property type="reaction ID" value="UER00161"/>
</dbReference>
<dbReference type="GO" id="GO:0005829">
    <property type="term" value="C:cytosol"/>
    <property type="evidence" value="ECO:0007669"/>
    <property type="project" value="TreeGrafter"/>
</dbReference>
<dbReference type="GO" id="GO:0005524">
    <property type="term" value="F:ATP binding"/>
    <property type="evidence" value="ECO:0007669"/>
    <property type="project" value="UniProtKB-UniRule"/>
</dbReference>
<dbReference type="GO" id="GO:0004141">
    <property type="term" value="F:dethiobiotin synthase activity"/>
    <property type="evidence" value="ECO:0007669"/>
    <property type="project" value="UniProtKB-UniRule"/>
</dbReference>
<dbReference type="GO" id="GO:0000287">
    <property type="term" value="F:magnesium ion binding"/>
    <property type="evidence" value="ECO:0007669"/>
    <property type="project" value="UniProtKB-UniRule"/>
</dbReference>
<dbReference type="GO" id="GO:0009102">
    <property type="term" value="P:biotin biosynthetic process"/>
    <property type="evidence" value="ECO:0007669"/>
    <property type="project" value="UniProtKB-UniRule"/>
</dbReference>
<dbReference type="CDD" id="cd03109">
    <property type="entry name" value="DTBS"/>
    <property type="match status" value="1"/>
</dbReference>
<dbReference type="FunFam" id="3.40.50.300:FF:000292">
    <property type="entry name" value="ATP-dependent dethiobiotin synthetase BioD"/>
    <property type="match status" value="1"/>
</dbReference>
<dbReference type="Gene3D" id="3.40.50.300">
    <property type="entry name" value="P-loop containing nucleotide triphosphate hydrolases"/>
    <property type="match status" value="1"/>
</dbReference>
<dbReference type="HAMAP" id="MF_00336">
    <property type="entry name" value="BioD"/>
    <property type="match status" value="1"/>
</dbReference>
<dbReference type="InterPro" id="IPR004472">
    <property type="entry name" value="DTB_synth_BioD"/>
</dbReference>
<dbReference type="InterPro" id="IPR027417">
    <property type="entry name" value="P-loop_NTPase"/>
</dbReference>
<dbReference type="NCBIfam" id="TIGR00347">
    <property type="entry name" value="bioD"/>
    <property type="match status" value="1"/>
</dbReference>
<dbReference type="PANTHER" id="PTHR43210">
    <property type="entry name" value="DETHIOBIOTIN SYNTHETASE"/>
    <property type="match status" value="1"/>
</dbReference>
<dbReference type="PANTHER" id="PTHR43210:SF5">
    <property type="entry name" value="DETHIOBIOTIN SYNTHETASE"/>
    <property type="match status" value="1"/>
</dbReference>
<dbReference type="Pfam" id="PF13500">
    <property type="entry name" value="AAA_26"/>
    <property type="match status" value="1"/>
</dbReference>
<dbReference type="PIRSF" id="PIRSF006755">
    <property type="entry name" value="DTB_synth"/>
    <property type="match status" value="1"/>
</dbReference>
<dbReference type="SUPFAM" id="SSF52540">
    <property type="entry name" value="P-loop containing nucleoside triphosphate hydrolases"/>
    <property type="match status" value="1"/>
</dbReference>
<name>BIOD_BURO1</name>
<reference key="1">
    <citation type="submission" date="2006-05" db="EMBL/GenBank/DDBJ databases">
        <title>Complete sequence of chromosome 1 of Burkholderia cenocepacia AU 1054.</title>
        <authorList>
            <consortium name="US DOE Joint Genome Institute"/>
            <person name="Copeland A."/>
            <person name="Lucas S."/>
            <person name="Lapidus A."/>
            <person name="Barry K."/>
            <person name="Detter J.C."/>
            <person name="Glavina del Rio T."/>
            <person name="Hammon N."/>
            <person name="Israni S."/>
            <person name="Dalin E."/>
            <person name="Tice H."/>
            <person name="Pitluck S."/>
            <person name="Chain P."/>
            <person name="Malfatti S."/>
            <person name="Shin M."/>
            <person name="Vergez L."/>
            <person name="Schmutz J."/>
            <person name="Larimer F."/>
            <person name="Land M."/>
            <person name="Hauser L."/>
            <person name="Kyrpides N."/>
            <person name="Lykidis A."/>
            <person name="LiPuma J.J."/>
            <person name="Konstantinidis K."/>
            <person name="Tiedje J.M."/>
            <person name="Richardson P."/>
        </authorList>
    </citation>
    <scope>NUCLEOTIDE SEQUENCE [LARGE SCALE GENOMIC DNA]</scope>
    <source>
        <strain>AU 1054</strain>
    </source>
</reference>
<accession>Q1BT35</accession>
<gene>
    <name evidence="1" type="primary">bioD</name>
    <name type="ordered locus">Bcen_2319</name>
</gene>
<protein>
    <recommendedName>
        <fullName evidence="1">ATP-dependent dethiobiotin synthetase BioD</fullName>
        <ecNumber evidence="1">6.3.3.3</ecNumber>
    </recommendedName>
    <alternativeName>
        <fullName evidence="1">DTB synthetase</fullName>
        <shortName evidence="1">DTBS</shortName>
    </alternativeName>
    <alternativeName>
        <fullName evidence="1">Dethiobiotin synthase</fullName>
    </alternativeName>
</protein>
<feature type="chain" id="PRO_0000302486" description="ATP-dependent dethiobiotin synthetase BioD">
    <location>
        <begin position="1"/>
        <end position="239"/>
    </location>
</feature>
<feature type="active site" evidence="1">
    <location>
        <position position="40"/>
    </location>
</feature>
<feature type="binding site" evidence="1">
    <location>
        <begin position="15"/>
        <end position="20"/>
    </location>
    <ligand>
        <name>ATP</name>
        <dbReference type="ChEBI" id="CHEBI:30616"/>
    </ligand>
</feature>
<feature type="binding site" evidence="1">
    <location>
        <position position="19"/>
    </location>
    <ligand>
        <name>Mg(2+)</name>
        <dbReference type="ChEBI" id="CHEBI:18420"/>
    </ligand>
</feature>
<feature type="binding site" evidence="1">
    <location>
        <position position="57"/>
    </location>
    <ligand>
        <name>ATP</name>
        <dbReference type="ChEBI" id="CHEBI:30616"/>
    </ligand>
</feature>
<feature type="binding site" evidence="1">
    <location>
        <position position="57"/>
    </location>
    <ligand>
        <name>Mg(2+)</name>
        <dbReference type="ChEBI" id="CHEBI:18420"/>
    </ligand>
</feature>
<feature type="binding site" evidence="1">
    <location>
        <begin position="118"/>
        <end position="121"/>
    </location>
    <ligand>
        <name>ATP</name>
        <dbReference type="ChEBI" id="CHEBI:30616"/>
    </ligand>
</feature>
<feature type="binding site" evidence="1">
    <location>
        <position position="118"/>
    </location>
    <ligand>
        <name>Mg(2+)</name>
        <dbReference type="ChEBI" id="CHEBI:18420"/>
    </ligand>
</feature>
<feature type="binding site" evidence="1">
    <location>
        <begin position="178"/>
        <end position="179"/>
    </location>
    <ligand>
        <name>ATP</name>
        <dbReference type="ChEBI" id="CHEBI:30616"/>
    </ligand>
</feature>
<keyword id="KW-0067">ATP-binding</keyword>
<keyword id="KW-0093">Biotin biosynthesis</keyword>
<keyword id="KW-0963">Cytoplasm</keyword>
<keyword id="KW-0436">Ligase</keyword>
<keyword id="KW-0460">Magnesium</keyword>
<keyword id="KW-0479">Metal-binding</keyword>
<keyword id="KW-0547">Nucleotide-binding</keyword>
<sequence length="239" mass="25189">MTAPLSVFVTGTDTEIGKTFVSAAMLHGFARHGLRAAALKPVAAGAYERDGVWRNEDADQLDAAANVALPPELRTPFLLKAPAAPHIVAAQEGVTLDLDTIVACHREALTRADVVVVEGVGGFRVPLNDTQDTADLAVALGLPVVLVVGVRLGCISHALLTADAIRQRGLTLAGWVANHVDPAMSFADENVATIRDWLAREHRAPLIGRIAHMTPAAPESAAAMLDIAALVESLRTARR</sequence>
<evidence type="ECO:0000255" key="1">
    <source>
        <dbReference type="HAMAP-Rule" id="MF_00336"/>
    </source>
</evidence>
<organism>
    <name type="scientific">Burkholderia orbicola (strain AU 1054)</name>
    <dbReference type="NCBI Taxonomy" id="331271"/>
    <lineage>
        <taxon>Bacteria</taxon>
        <taxon>Pseudomonadati</taxon>
        <taxon>Pseudomonadota</taxon>
        <taxon>Betaproteobacteria</taxon>
        <taxon>Burkholderiales</taxon>
        <taxon>Burkholderiaceae</taxon>
        <taxon>Burkholderia</taxon>
        <taxon>Burkholderia cepacia complex</taxon>
        <taxon>Burkholderia orbicola</taxon>
    </lineage>
</organism>